<name>STABP_RAT</name>
<comment type="function">
    <text evidence="2">Zinc metalloprotease that specifically cleaves 'Lys-63'-linked polyubiquitin chains. Does not cleave 'Lys-48'-linked polyubiquitin chains. Plays a role in signal transduction for cell growth and MYC induction mediated by IL-2 and GM-CSF. Potentiates BMP (bone morphogenetic protein) signaling by antagonizing the inhibitory action of SMAD6 and SMAD7. Has a key role in regulation of cell surface receptor-mediated endocytosis and ubiquitin-dependent sorting of receptors to lysosomes. Endosomal localization of STAMBP is required for efficient EGFR degradation but not for its internalization. Involved in the negative regulation of PI3K-AKT-mTOR and RAS-MAP signaling pathways.</text>
</comment>
<comment type="cofactor">
    <cofactor evidence="1">
        <name>Zn(2+)</name>
        <dbReference type="ChEBI" id="CHEBI:29105"/>
    </cofactor>
    <text evidence="1">Binds 2 Zn(2+) ions per subunit.</text>
</comment>
<comment type="activity regulation">
    <text evidence="2">Inhibited by N-ethylmaleimide.</text>
</comment>
<comment type="subunit">
    <text evidence="2">Interacts with STAM. Interacts with SMAD6 and SMAD7. Interacts with CHMP3; the interaction appears to relieve the autoinhibition of CHMP3. Interacts with SMURF2 and RNF11; this interaction promotes ubiquitination.</text>
</comment>
<comment type="subcellular location">
    <subcellularLocation>
        <location evidence="2">Nucleus</location>
    </subcellularLocation>
    <subcellularLocation>
        <location evidence="2">Membrane</location>
        <topology evidence="2">Peripheral membrane protein</topology>
    </subcellularLocation>
    <subcellularLocation>
        <location evidence="2">Cytoplasm</location>
    </subcellularLocation>
    <subcellularLocation>
        <location evidence="2">Early endosome</location>
    </subcellularLocation>
</comment>
<comment type="domain">
    <text evidence="1">The JAMM motif is essential for the protease activity.</text>
</comment>
<comment type="PTM">
    <text evidence="2">Phosphorylated after BMP type I receptor activation.</text>
</comment>
<comment type="PTM">
    <text evidence="2">Ubiquitinated by SMURF2 in the presence of RNF11.</text>
</comment>
<comment type="similarity">
    <text evidence="5">Belongs to the peptidase M67C family.</text>
</comment>
<proteinExistence type="evidence at transcript level"/>
<feature type="chain" id="PRO_0000194871" description="STAM-binding protein">
    <location>
        <begin position="1"/>
        <end position="424"/>
    </location>
</feature>
<feature type="domain" description="MPN" evidence="4">
    <location>
        <begin position="257"/>
        <end position="388"/>
    </location>
</feature>
<feature type="region of interest" description="Interaction with CHMP3" evidence="2">
    <location>
        <begin position="1"/>
        <end position="127"/>
    </location>
</feature>
<feature type="region of interest" description="Interaction with STAM" evidence="2">
    <location>
        <begin position="227"/>
        <end position="231"/>
    </location>
</feature>
<feature type="short sequence motif" description="JAMM motif" evidence="4">
    <location>
        <begin position="335"/>
        <end position="348"/>
    </location>
</feature>
<feature type="binding site" evidence="4">
    <location>
        <position position="335"/>
    </location>
    <ligand>
        <name>Zn(2+)</name>
        <dbReference type="ChEBI" id="CHEBI:29105"/>
        <label>1</label>
        <note>catalytic</note>
    </ligand>
</feature>
<feature type="binding site" evidence="4">
    <location>
        <position position="337"/>
    </location>
    <ligand>
        <name>Zn(2+)</name>
        <dbReference type="ChEBI" id="CHEBI:29105"/>
        <label>1</label>
        <note>catalytic</note>
    </ligand>
</feature>
<feature type="binding site" evidence="4">
    <location>
        <position position="348"/>
    </location>
    <ligand>
        <name>Zn(2+)</name>
        <dbReference type="ChEBI" id="CHEBI:29105"/>
        <label>1</label>
        <note>catalytic</note>
    </ligand>
</feature>
<feature type="binding site" evidence="3">
    <location>
        <position position="350"/>
    </location>
    <ligand>
        <name>Zn(2+)</name>
        <dbReference type="ChEBI" id="CHEBI:29105"/>
        <label>2</label>
    </ligand>
</feature>
<feature type="binding site" evidence="3">
    <location>
        <position position="390"/>
    </location>
    <ligand>
        <name>Zn(2+)</name>
        <dbReference type="ChEBI" id="CHEBI:29105"/>
        <label>2</label>
    </ligand>
</feature>
<feature type="binding site" evidence="3">
    <location>
        <position position="396"/>
    </location>
    <ligand>
        <name>Zn(2+)</name>
        <dbReference type="ChEBI" id="CHEBI:29105"/>
        <label>2</label>
    </ligand>
</feature>
<feature type="binding site" evidence="3">
    <location>
        <position position="398"/>
    </location>
    <ligand>
        <name>Zn(2+)</name>
        <dbReference type="ChEBI" id="CHEBI:29105"/>
        <label>2</label>
    </ligand>
</feature>
<feature type="site" description="Indirect zinc-binding" evidence="3">
    <location>
        <position position="280"/>
    </location>
</feature>
<feature type="modified residue" description="Phosphoserine" evidence="2">
    <location>
        <position position="2"/>
    </location>
</feature>
<feature type="modified residue" description="Phosphoserine" evidence="2">
    <location>
        <position position="48"/>
    </location>
</feature>
<feature type="modified residue" description="Phosphoserine" evidence="2">
    <location>
        <position position="243"/>
    </location>
</feature>
<gene>
    <name type="primary">Stambp</name>
    <name type="synonym">Amsh</name>
</gene>
<protein>
    <recommendedName>
        <fullName>STAM-binding protein</fullName>
        <ecNumber evidence="2">3.4.19.-</ecNumber>
    </recommendedName>
    <alternativeName>
        <fullName>Associated molecule with the SH3 domain of STAM</fullName>
    </alternativeName>
</protein>
<accession>Q8R424</accession>
<organism>
    <name type="scientific">Rattus norvegicus</name>
    <name type="common">Rat</name>
    <dbReference type="NCBI Taxonomy" id="10116"/>
    <lineage>
        <taxon>Eukaryota</taxon>
        <taxon>Metazoa</taxon>
        <taxon>Chordata</taxon>
        <taxon>Craniata</taxon>
        <taxon>Vertebrata</taxon>
        <taxon>Euteleostomi</taxon>
        <taxon>Mammalia</taxon>
        <taxon>Eutheria</taxon>
        <taxon>Euarchontoglires</taxon>
        <taxon>Glires</taxon>
        <taxon>Rodentia</taxon>
        <taxon>Myomorpha</taxon>
        <taxon>Muroidea</taxon>
        <taxon>Muridae</taxon>
        <taxon>Murinae</taxon>
        <taxon>Rattus</taxon>
    </lineage>
</organism>
<evidence type="ECO:0000250" key="1">
    <source>
        <dbReference type="UniProtKB" id="O35864"/>
    </source>
</evidence>
<evidence type="ECO:0000250" key="2">
    <source>
        <dbReference type="UniProtKB" id="O95630"/>
    </source>
</evidence>
<evidence type="ECO:0000250" key="3">
    <source>
        <dbReference type="UniProtKB" id="Q96FJ0"/>
    </source>
</evidence>
<evidence type="ECO:0000255" key="4">
    <source>
        <dbReference type="PROSITE-ProRule" id="PRU01182"/>
    </source>
</evidence>
<evidence type="ECO:0000305" key="5"/>
<keyword id="KW-0963">Cytoplasm</keyword>
<keyword id="KW-0967">Endosome</keyword>
<keyword id="KW-0378">Hydrolase</keyword>
<keyword id="KW-0472">Membrane</keyword>
<keyword id="KW-0479">Metal-binding</keyword>
<keyword id="KW-0482">Metalloprotease</keyword>
<keyword id="KW-0539">Nucleus</keyword>
<keyword id="KW-0597">Phosphoprotein</keyword>
<keyword id="KW-0645">Protease</keyword>
<keyword id="KW-1185">Reference proteome</keyword>
<keyword id="KW-0832">Ubl conjugation</keyword>
<keyword id="KW-0833">Ubl conjugation pathway</keyword>
<keyword id="KW-0862">Zinc</keyword>
<reference key="1">
    <citation type="submission" date="2002-03" db="EMBL/GenBank/DDBJ databases">
        <authorList>
            <person name="Pawlak A."/>
            <person name="Guellaen G."/>
        </authorList>
    </citation>
    <scope>NUCLEOTIDE SEQUENCE [MRNA]</scope>
</reference>
<reference key="2">
    <citation type="journal article" date="2004" name="Genome Res.">
        <title>The status, quality, and expansion of the NIH full-length cDNA project: the Mammalian Gene Collection (MGC).</title>
        <authorList>
            <consortium name="The MGC Project Team"/>
        </authorList>
    </citation>
    <scope>NUCLEOTIDE SEQUENCE [LARGE SCALE MRNA]</scope>
    <source>
        <tissue>Prostate</tissue>
    </source>
</reference>
<dbReference type="EC" id="3.4.19.-" evidence="2"/>
<dbReference type="EMBL" id="AY083159">
    <property type="protein sequence ID" value="AAL92520.1"/>
    <property type="molecule type" value="mRNA"/>
</dbReference>
<dbReference type="EMBL" id="BC061711">
    <property type="protein sequence ID" value="AAH61711.1"/>
    <property type="molecule type" value="mRNA"/>
</dbReference>
<dbReference type="RefSeq" id="NP_612540.1">
    <property type="nucleotide sequence ID" value="NM_138531.2"/>
</dbReference>
<dbReference type="RefSeq" id="XP_006236788.1">
    <property type="nucleotide sequence ID" value="XM_006236726.5"/>
</dbReference>
<dbReference type="RefSeq" id="XP_006236789.1">
    <property type="nucleotide sequence ID" value="XM_006236727.5"/>
</dbReference>
<dbReference type="RefSeq" id="XP_008761267.1">
    <property type="nucleotide sequence ID" value="XM_008763045.2"/>
</dbReference>
<dbReference type="RefSeq" id="XP_008761268.1">
    <property type="nucleotide sequence ID" value="XM_008763046.2"/>
</dbReference>
<dbReference type="RefSeq" id="XP_008761269.1">
    <property type="nucleotide sequence ID" value="XM_008763047.2"/>
</dbReference>
<dbReference type="RefSeq" id="XP_008761270.1">
    <property type="nucleotide sequence ID" value="XM_008763048.2"/>
</dbReference>
<dbReference type="RefSeq" id="XP_038962914.1">
    <property type="nucleotide sequence ID" value="XM_039106986.2"/>
</dbReference>
<dbReference type="RefSeq" id="XP_038962915.1">
    <property type="nucleotide sequence ID" value="XM_039106987.2"/>
</dbReference>
<dbReference type="RefSeq" id="XP_063141530.1">
    <property type="nucleotide sequence ID" value="XM_063285460.1"/>
</dbReference>
<dbReference type="SMR" id="Q8R424"/>
<dbReference type="FunCoup" id="Q8R424">
    <property type="interactions" value="4316"/>
</dbReference>
<dbReference type="IntAct" id="Q8R424">
    <property type="interactions" value="2"/>
</dbReference>
<dbReference type="STRING" id="10116.ENSRNOP00000069824"/>
<dbReference type="MEROPS" id="M67.003"/>
<dbReference type="iPTMnet" id="Q8R424"/>
<dbReference type="PhosphoSitePlus" id="Q8R424"/>
<dbReference type="PaxDb" id="10116-ENSRNOP00000014708"/>
<dbReference type="Ensembl" id="ENSRNOT00000014708.6">
    <property type="protein sequence ID" value="ENSRNOP00000014708.3"/>
    <property type="gene ID" value="ENSRNOG00000012227.8"/>
</dbReference>
<dbReference type="GeneID" id="171565"/>
<dbReference type="KEGG" id="rno:171565"/>
<dbReference type="UCSC" id="RGD:619963">
    <property type="organism name" value="rat"/>
</dbReference>
<dbReference type="AGR" id="RGD:619963"/>
<dbReference type="CTD" id="10617"/>
<dbReference type="RGD" id="619963">
    <property type="gene designation" value="Stambp"/>
</dbReference>
<dbReference type="eggNOG" id="KOG2880">
    <property type="taxonomic scope" value="Eukaryota"/>
</dbReference>
<dbReference type="GeneTree" id="ENSGT00940000153710"/>
<dbReference type="HOGENOM" id="CLU_023304_0_1_1"/>
<dbReference type="InParanoid" id="Q8R424"/>
<dbReference type="OMA" id="MKFMTLF"/>
<dbReference type="OrthoDB" id="3640at2759"/>
<dbReference type="PhylomeDB" id="Q8R424"/>
<dbReference type="TreeFam" id="TF323215"/>
<dbReference type="Reactome" id="R-RNO-5689901">
    <property type="pathway name" value="Metalloprotease DUBs"/>
</dbReference>
<dbReference type="PRO" id="PR:Q8R424"/>
<dbReference type="Proteomes" id="UP000002494">
    <property type="component" value="Chromosome 4"/>
</dbReference>
<dbReference type="Bgee" id="ENSRNOG00000012227">
    <property type="expression patterns" value="Expressed in testis and 20 other cell types or tissues"/>
</dbReference>
<dbReference type="GO" id="GO:0032154">
    <property type="term" value="C:cleavage furrow"/>
    <property type="evidence" value="ECO:0000266"/>
    <property type="project" value="RGD"/>
</dbReference>
<dbReference type="GO" id="GO:0005769">
    <property type="term" value="C:early endosome"/>
    <property type="evidence" value="ECO:0007669"/>
    <property type="project" value="UniProtKB-SubCell"/>
</dbReference>
<dbReference type="GO" id="GO:0005768">
    <property type="term" value="C:endosome"/>
    <property type="evidence" value="ECO:0000318"/>
    <property type="project" value="GO_Central"/>
</dbReference>
<dbReference type="GO" id="GO:0005634">
    <property type="term" value="C:nucleus"/>
    <property type="evidence" value="ECO:0007669"/>
    <property type="project" value="UniProtKB-SubCell"/>
</dbReference>
<dbReference type="GO" id="GO:0101005">
    <property type="term" value="F:deubiquitinase activity"/>
    <property type="evidence" value="ECO:0000266"/>
    <property type="project" value="RGD"/>
</dbReference>
<dbReference type="GO" id="GO:0061578">
    <property type="term" value="F:K63-linked deubiquitinase activity"/>
    <property type="evidence" value="ECO:0000250"/>
    <property type="project" value="UniProtKB"/>
</dbReference>
<dbReference type="GO" id="GO:0046872">
    <property type="term" value="F:metal ion binding"/>
    <property type="evidence" value="ECO:0007669"/>
    <property type="project" value="UniProtKB-KW"/>
</dbReference>
<dbReference type="GO" id="GO:0140492">
    <property type="term" value="F:metal-dependent deubiquitinase activity"/>
    <property type="evidence" value="ECO:0007669"/>
    <property type="project" value="InterPro"/>
</dbReference>
<dbReference type="GO" id="GO:0019904">
    <property type="term" value="F:protein domain specific binding"/>
    <property type="evidence" value="ECO:0000266"/>
    <property type="project" value="RGD"/>
</dbReference>
<dbReference type="GO" id="GO:0110088">
    <property type="term" value="P:hippocampal neuron apoptotic process"/>
    <property type="evidence" value="ECO:0000266"/>
    <property type="project" value="RGD"/>
</dbReference>
<dbReference type="GO" id="GO:0000281">
    <property type="term" value="P:mitotic cytokinesis"/>
    <property type="evidence" value="ECO:0000266"/>
    <property type="project" value="RGD"/>
</dbReference>
<dbReference type="GO" id="GO:0110091">
    <property type="term" value="P:negative regulation of hippocampal neuron apoptotic process"/>
    <property type="evidence" value="ECO:0000266"/>
    <property type="project" value="RGD"/>
</dbReference>
<dbReference type="GO" id="GO:0051898">
    <property type="term" value="P:negative regulation of phosphatidylinositol 3-kinase/protein kinase B signal transduction"/>
    <property type="evidence" value="ECO:0000266"/>
    <property type="project" value="RGD"/>
</dbReference>
<dbReference type="GO" id="GO:0046580">
    <property type="term" value="P:negative regulation of Ras protein signal transduction"/>
    <property type="evidence" value="ECO:0000266"/>
    <property type="project" value="RGD"/>
</dbReference>
<dbReference type="GO" id="GO:0016579">
    <property type="term" value="P:protein deubiquitination"/>
    <property type="evidence" value="ECO:0000266"/>
    <property type="project" value="RGD"/>
</dbReference>
<dbReference type="GO" id="GO:0070536">
    <property type="term" value="P:protein K63-linked deubiquitination"/>
    <property type="evidence" value="ECO:0007669"/>
    <property type="project" value="InterPro"/>
</dbReference>
<dbReference type="GO" id="GO:0006508">
    <property type="term" value="P:proteolysis"/>
    <property type="evidence" value="ECO:0007669"/>
    <property type="project" value="UniProtKB-KW"/>
</dbReference>
<dbReference type="CDD" id="cd08066">
    <property type="entry name" value="MPN_AMSH_like"/>
    <property type="match status" value="1"/>
</dbReference>
<dbReference type="FunFam" id="3.40.140.10:FF:000010">
    <property type="entry name" value="AMSH-like protease isoform X1"/>
    <property type="match status" value="1"/>
</dbReference>
<dbReference type="FunFam" id="1.20.58.80:FF:000013">
    <property type="entry name" value="STAM-binding protein-like A"/>
    <property type="match status" value="1"/>
</dbReference>
<dbReference type="Gene3D" id="3.40.140.10">
    <property type="entry name" value="Cytidine Deaminase, domain 2"/>
    <property type="match status" value="1"/>
</dbReference>
<dbReference type="Gene3D" id="1.20.58.80">
    <property type="entry name" value="Phosphotransferase system, lactose/cellobiose-type IIA subunit"/>
    <property type="match status" value="1"/>
</dbReference>
<dbReference type="InterPro" id="IPR000555">
    <property type="entry name" value="JAMM/MPN+_dom"/>
</dbReference>
<dbReference type="InterPro" id="IPR037518">
    <property type="entry name" value="MPN"/>
</dbReference>
<dbReference type="InterPro" id="IPR044098">
    <property type="entry name" value="STAMBP/STALP-like_MPN"/>
</dbReference>
<dbReference type="InterPro" id="IPR015063">
    <property type="entry name" value="USP8_dimer"/>
</dbReference>
<dbReference type="PANTHER" id="PTHR12947">
    <property type="entry name" value="AMSH-LIKE PROTEASE"/>
    <property type="match status" value="1"/>
</dbReference>
<dbReference type="PANTHER" id="PTHR12947:SF8">
    <property type="entry name" value="STAM-BINDING PROTEIN"/>
    <property type="match status" value="1"/>
</dbReference>
<dbReference type="Pfam" id="PF01398">
    <property type="entry name" value="JAB"/>
    <property type="match status" value="1"/>
</dbReference>
<dbReference type="Pfam" id="PF08969">
    <property type="entry name" value="USP8_dimer"/>
    <property type="match status" value="1"/>
</dbReference>
<dbReference type="SMART" id="SM00232">
    <property type="entry name" value="JAB_MPN"/>
    <property type="match status" value="1"/>
</dbReference>
<dbReference type="SUPFAM" id="SSF102712">
    <property type="entry name" value="JAB1/MPN domain"/>
    <property type="match status" value="1"/>
</dbReference>
<dbReference type="SUPFAM" id="SSF140856">
    <property type="entry name" value="USP8 N-terminal domain-like"/>
    <property type="match status" value="1"/>
</dbReference>
<dbReference type="PROSITE" id="PS50249">
    <property type="entry name" value="MPN"/>
    <property type="match status" value="1"/>
</dbReference>
<sequence>MSDHADVSLPPQDRVRILSQLGSAVELNEDIPPRRYFRSGVEIIRMASIYSEEGNIEHAFILYNKYITLFIEKLPKHRDYKSAIIPEKKDAVKKLKNVAFPKAEELKTELLKRYTKEYEQYKERKKKEEEELARNIAIQQELEKEKQRVAQQKQKQLEQEQFHAFEKMIQKQELEKERLKIVQEFGKVDPGPCGPLLPDLEKPCVDVAPSSPFSPTQTSDCNTTLRPAKPPVVDRSLKPGALSVIENVPTIEGLRHIVVPRNLCSEFLQLASANTAKGIETCGVLCGKLMRNEFTITHVLIPRQNGGPDYCHTENEEEIFFMQDDLGLLTLGWIHTHPTQTAFLSSVDLHTHCSYQMMLPESIAIVCSPKFQETGFFKLTDYGLQEISTCRQKGFHPHGRDPPLFCDCSHVTVKDRIVTITDLR</sequence>